<comment type="function">
    <text evidence="1 4">Central enzyme in the extracellular metabolism of plasma lipoproteins. Synthesized mainly in the liver and secreted into plasma where it converts cholesterol and phosphatidylcholines (lecithins) to cholesteryl esters and lysophosphatidylcholines on the surface of high and low density lipoproteins (HDLs and LDLs). The cholesterol ester is then transported back to the liver. Also produced in the brain by primary astrocytes, and esterifies free cholesterol on nascent APOE-containing lipoproteins secreted from glia and influences cerebral spinal fluid (CSF) APOE- and APOA1 levels. Together with APOE and the cholesterol transporter ABCA1, plays a key role in the maturation of glial-derived, nascent lipoproteins. Required for remodeling high-density lipoprotein particles into their spherical forms (By similarity). Has a preference for plasma 16:0-18:2 or 18:O-18:2 phosphatidylcholines (PubMed:8820107). Catalyzes the hydrolysis of 1-O-alkyl-2-acetyl-sn-glycero-3-phosphocholine (platelet-activating factor or PAF) to 1-O-alkyl-sn-glycero-3-phosphocholine (lyso-PAF) (By similarity). Also catalyzes the transfer of the acetate group from PAF to 1-hexadecanoyl-sn-glycero-3-phosphocholine forming lyso-PAF (By similarity). Catalyzes the esterification of (24S)-hydroxycholesterol (24(S)OH-C), also known as cerebrosterol to produce 24(S)OH-C monoesters (By similarity).</text>
</comment>
<comment type="catalytic activity">
    <reaction evidence="3 4">
        <text>a sterol + a 1,2-diacyl-sn-glycero-3-phosphocholine = a sterol ester + a 1-acyl-sn-glycero-3-phosphocholine</text>
        <dbReference type="Rhea" id="RHEA:21204"/>
        <dbReference type="ChEBI" id="CHEBI:15889"/>
        <dbReference type="ChEBI" id="CHEBI:35915"/>
        <dbReference type="ChEBI" id="CHEBI:57643"/>
        <dbReference type="ChEBI" id="CHEBI:58168"/>
        <dbReference type="EC" id="2.3.1.43"/>
    </reaction>
</comment>
<comment type="catalytic activity">
    <reaction evidence="1">
        <text>a 1-O-alkyl-2-acetyl-sn-glycero-3-phosphocholine + H2O = a 1-O-alkyl-sn-glycero-3-phosphocholine + acetate + H(+)</text>
        <dbReference type="Rhea" id="RHEA:17777"/>
        <dbReference type="ChEBI" id="CHEBI:15377"/>
        <dbReference type="ChEBI" id="CHEBI:15378"/>
        <dbReference type="ChEBI" id="CHEBI:30089"/>
        <dbReference type="ChEBI" id="CHEBI:30909"/>
        <dbReference type="ChEBI" id="CHEBI:36707"/>
        <dbReference type="EC" id="3.1.1.47"/>
    </reaction>
    <physiologicalReaction direction="left-to-right" evidence="1">
        <dbReference type="Rhea" id="RHEA:17778"/>
    </physiologicalReaction>
</comment>
<comment type="catalytic activity">
    <reaction evidence="1">
        <text>a 1-hexadecanoyl-2-acyl-sn-glycero-3-phosphocholine + (24S)-hydroxycholesterol = (24S)-24-hydroxycholesterol ester + 1-hexadecanoyl-sn-glycero-3-phosphocholine</text>
        <dbReference type="Rhea" id="RHEA:43216"/>
        <dbReference type="ChEBI" id="CHEBI:34310"/>
        <dbReference type="ChEBI" id="CHEBI:72998"/>
        <dbReference type="ChEBI" id="CHEBI:77369"/>
        <dbReference type="ChEBI" id="CHEBI:82869"/>
    </reaction>
    <physiologicalReaction direction="left-to-right" evidence="1">
        <dbReference type="Rhea" id="RHEA:43217"/>
    </physiologicalReaction>
</comment>
<comment type="catalytic activity">
    <reaction evidence="1">
        <text>(24S)-hydroxycholesterol + 1-hexadecanoyl-2-(9Z,12Z-octadecadienoyl)-sn-glycero-3-phosphocholine = (24S)-hydroxycholesterol 3-linoleoate + 1-hexadecanoyl-sn-glycero-3-phosphocholine</text>
        <dbReference type="Rhea" id="RHEA:43224"/>
        <dbReference type="ChEBI" id="CHEBI:34310"/>
        <dbReference type="ChEBI" id="CHEBI:72998"/>
        <dbReference type="ChEBI" id="CHEBI:73002"/>
        <dbReference type="ChEBI" id="CHEBI:82875"/>
    </reaction>
    <physiologicalReaction direction="left-to-right" evidence="1">
        <dbReference type="Rhea" id="RHEA:43225"/>
    </physiologicalReaction>
</comment>
<comment type="catalytic activity">
    <reaction evidence="1">
        <text>1-hexadecanoyl-2-(5Z,8Z,11Z,14Z-eicosatetraenoyl)-sn-glycero-3-phosphocholine + cholesterol = cholesteryl (5Z,8Z,11Z,14Z)-eicosatetraenoate + 1-hexadecanoyl-sn-glycero-3-phosphocholine</text>
        <dbReference type="Rhea" id="RHEA:53448"/>
        <dbReference type="ChEBI" id="CHEBI:16113"/>
        <dbReference type="ChEBI" id="CHEBI:72998"/>
        <dbReference type="ChEBI" id="CHEBI:73003"/>
        <dbReference type="ChEBI" id="CHEBI:82751"/>
    </reaction>
    <physiologicalReaction direction="left-to-right" evidence="1">
        <dbReference type="Rhea" id="RHEA:53449"/>
    </physiologicalReaction>
</comment>
<comment type="catalytic activity">
    <reaction evidence="1">
        <text>1-hexadecanoyl-2-(9Z-octadecenoyl)-sn-glycero-3-phosphocholine + cholesterol = cholesteryl (9Z-octadecenoate) + 1-hexadecanoyl-sn-glycero-3-phosphocholine</text>
        <dbReference type="Rhea" id="RHEA:53456"/>
        <dbReference type="ChEBI" id="CHEBI:16113"/>
        <dbReference type="ChEBI" id="CHEBI:46898"/>
        <dbReference type="ChEBI" id="CHEBI:72998"/>
        <dbReference type="ChEBI" id="CHEBI:73001"/>
    </reaction>
    <physiologicalReaction direction="left-to-right" evidence="1">
        <dbReference type="Rhea" id="RHEA:53457"/>
    </physiologicalReaction>
</comment>
<comment type="catalytic activity">
    <reaction evidence="1">
        <text>1-hexadecanoyl-2-(8Z,11Z,14Z-eicosatrienoyl)-sn-glycero-3-phosphocholine + cholesterol = cholesteryl (8Z,11Z,14Z)-eicosatrienoate + 1-hexadecanoyl-sn-glycero-3-phosphocholine</text>
        <dbReference type="Rhea" id="RHEA:53464"/>
        <dbReference type="ChEBI" id="CHEBI:16113"/>
        <dbReference type="ChEBI" id="CHEBI:72998"/>
        <dbReference type="ChEBI" id="CHEBI:84346"/>
        <dbReference type="ChEBI" id="CHEBI:86121"/>
    </reaction>
    <physiologicalReaction direction="left-to-right" evidence="1">
        <dbReference type="Rhea" id="RHEA:53465"/>
    </physiologicalReaction>
</comment>
<comment type="catalytic activity">
    <reaction evidence="1">
        <text>1-hexadecanoyl-2-(5Z,8Z,11Z-eicosatrienoyl)-sn-glycero-3-phosphocholine + cholesterol = cholesteryl (5Z,8Z,11Z)-eicosatrienoate + 1-hexadecanoyl-sn-glycero-3-phosphocholine</text>
        <dbReference type="Rhea" id="RHEA:53460"/>
        <dbReference type="ChEBI" id="CHEBI:16113"/>
        <dbReference type="ChEBI" id="CHEBI:72998"/>
        <dbReference type="ChEBI" id="CHEBI:86119"/>
        <dbReference type="ChEBI" id="CHEBI:88752"/>
    </reaction>
    <physiologicalReaction direction="left-to-right" evidence="1">
        <dbReference type="Rhea" id="RHEA:53461"/>
    </physiologicalReaction>
</comment>
<comment type="catalytic activity">
    <reaction evidence="1">
        <text>1-hexadecanoyl-2-(5Z,8Z,11Z,14Z,17Z-eicosapentaenoyl)-sn-glycero-3-phosphocholine + cholesterol = (5Z,8Z,11Z,14Z,17Z-eicosapentaenoyl)-cholesterol + 1-hexadecanoyl-sn-glycero-3-phosphocholine</text>
        <dbReference type="Rhea" id="RHEA:53468"/>
        <dbReference type="ChEBI" id="CHEBI:16113"/>
        <dbReference type="ChEBI" id="CHEBI:72998"/>
        <dbReference type="ChEBI" id="CHEBI:84969"/>
        <dbReference type="ChEBI" id="CHEBI:86137"/>
    </reaction>
    <physiologicalReaction direction="left-to-right" evidence="1">
        <dbReference type="Rhea" id="RHEA:53469"/>
    </physiologicalReaction>
</comment>
<comment type="catalytic activity">
    <reaction evidence="1">
        <text>1-hexadecanoyl-2-(9Z,12Z-octadecadienoyl)-sn-glycero-3-phosphocholine + cholesterol = cholesteryl (9Z,12Z)-octadecadienoate + 1-hexadecanoyl-sn-glycero-3-phosphocholine</text>
        <dbReference type="Rhea" id="RHEA:53472"/>
        <dbReference type="ChEBI" id="CHEBI:16113"/>
        <dbReference type="ChEBI" id="CHEBI:41509"/>
        <dbReference type="ChEBI" id="CHEBI:72998"/>
        <dbReference type="ChEBI" id="CHEBI:73002"/>
    </reaction>
    <physiologicalReaction direction="left-to-right" evidence="1">
        <dbReference type="Rhea" id="RHEA:53473"/>
    </physiologicalReaction>
</comment>
<comment type="catalytic activity">
    <reaction evidence="1">
        <text>1-hexadecanoyl-2-(6Z,9Z,12Z-octadecatrienoyl)-sn-glycero-3-phosphocholine + cholesterol = (6Z,9Z,12Z-octadecatrienoyl)-cholesterol + 1-hexadecanoyl-sn-glycero-3-phosphocholine</text>
        <dbReference type="Rhea" id="RHEA:53476"/>
        <dbReference type="ChEBI" id="CHEBI:16113"/>
        <dbReference type="ChEBI" id="CHEBI:72998"/>
        <dbReference type="ChEBI" id="CHEBI:84786"/>
        <dbReference type="ChEBI" id="CHEBI:88756"/>
    </reaction>
    <physiologicalReaction direction="left-to-right" evidence="1">
        <dbReference type="Rhea" id="RHEA:53477"/>
    </physiologicalReaction>
</comment>
<comment type="catalytic activity">
    <reaction evidence="1">
        <text>1-hexadecanoyl-2-(11Z,14Z,17Z-eicosatrienoyl)-sn-glycero-3-phosphocholine + cholesterol = (11Z,14Z,17Z-eicosatrienoyl)-cholesterol + 1-hexadecanoyl-sn-glycero-3-phosphocholine</text>
        <dbReference type="Rhea" id="RHEA:53516"/>
        <dbReference type="ChEBI" id="CHEBI:16113"/>
        <dbReference type="ChEBI" id="CHEBI:72998"/>
        <dbReference type="ChEBI" id="CHEBI:137411"/>
        <dbReference type="ChEBI" id="CHEBI:137412"/>
    </reaction>
    <physiologicalReaction direction="left-to-right" evidence="1">
        <dbReference type="Rhea" id="RHEA:53517"/>
    </physiologicalReaction>
</comment>
<comment type="catalytic activity">
    <reaction evidence="1">
        <text>1-hexadecanoyl-2-(9Z,12Z,15Z-octadecatrienoyl)-sn-glycero-3-phosphocholine + cholesterol = (9Z,12Z,15Z-octadecatrienoyl)-cholesterol + 1-hexadecanoyl-sn-glycero-3-phosphocholine</text>
        <dbReference type="Rhea" id="RHEA:53520"/>
        <dbReference type="ChEBI" id="CHEBI:16113"/>
        <dbReference type="ChEBI" id="CHEBI:72998"/>
        <dbReference type="ChEBI" id="CHEBI:84341"/>
        <dbReference type="ChEBI" id="CHEBI:84789"/>
    </reaction>
    <physiologicalReaction direction="left-to-right" evidence="1">
        <dbReference type="Rhea" id="RHEA:53521"/>
    </physiologicalReaction>
</comment>
<comment type="catalytic activity">
    <reaction evidence="1">
        <text>1-hexadecanoyl-2-(9Z,12Z-octadecadienoyl)-sn-glycero-3-phosphocholine + H2O = (9Z,12Z)-octadecadienoate + 1-hexadecanoyl-sn-glycero-3-phosphocholine + H(+)</text>
        <dbReference type="Rhea" id="RHEA:40811"/>
        <dbReference type="ChEBI" id="CHEBI:15377"/>
        <dbReference type="ChEBI" id="CHEBI:15378"/>
        <dbReference type="ChEBI" id="CHEBI:30245"/>
        <dbReference type="ChEBI" id="CHEBI:72998"/>
        <dbReference type="ChEBI" id="CHEBI:73002"/>
    </reaction>
    <physiologicalReaction direction="left-to-right" evidence="1">
        <dbReference type="Rhea" id="RHEA:40812"/>
    </physiologicalReaction>
</comment>
<comment type="catalytic activity">
    <reaction evidence="1">
        <text>1-hexadecanoyl-2-(5Z,8Z,11Z,14Z-eicosatetraenoyl)-sn-glycero-3-phosphocholine + H2O = 1-hexadecanoyl-sn-glycero-3-phosphocholine + (5Z,8Z,11Z,14Z)-eicosatetraenoate + H(+)</text>
        <dbReference type="Rhea" id="RHEA:40427"/>
        <dbReference type="ChEBI" id="CHEBI:15377"/>
        <dbReference type="ChEBI" id="CHEBI:15378"/>
        <dbReference type="ChEBI" id="CHEBI:32395"/>
        <dbReference type="ChEBI" id="CHEBI:72998"/>
        <dbReference type="ChEBI" id="CHEBI:73003"/>
    </reaction>
    <physiologicalReaction direction="left-to-right" evidence="1">
        <dbReference type="Rhea" id="RHEA:40428"/>
    </physiologicalReaction>
</comment>
<comment type="catalytic activity">
    <reaction evidence="1">
        <text>a 1-O-alkyl-2-acetyl-sn-glycero-3-phosphocholine + 1-hexadecanoyl-sn-glycero-3-phosphocholine = 1-hexadecanoyl-2-acetyl-sn-glycero-3-phosphocholine + a 1-O-alkyl-sn-glycero-3-phosphocholine</text>
        <dbReference type="Rhea" id="RHEA:53636"/>
        <dbReference type="ChEBI" id="CHEBI:30909"/>
        <dbReference type="ChEBI" id="CHEBI:36707"/>
        <dbReference type="ChEBI" id="CHEBI:72998"/>
        <dbReference type="ChEBI" id="CHEBI:75219"/>
    </reaction>
    <physiologicalReaction direction="left-to-right" evidence="1">
        <dbReference type="Rhea" id="RHEA:53637"/>
    </physiologicalReaction>
</comment>
<comment type="subcellular location">
    <subcellularLocation>
        <location evidence="4">Secreted</location>
    </subcellularLocation>
    <text evidence="1 4">Secreted into blood plasma (PubMed:8820107). Produced in astrocytes and secreted into cerebral spinal fluid (CSF) (By similarity).</text>
</comment>
<comment type="tissue specificity">
    <text evidence="4 5">Detected in blood plasma (at protein level) (PubMed:8820107). Highly expressed in liver.</text>
</comment>
<comment type="induction">
    <text evidence="5">Levels increase up to 3-fold on a 6-week cholesterol-enriched diet.</text>
</comment>
<comment type="similarity">
    <text evidence="6">Belongs to the AB hydrolase superfamily. Lipase family.</text>
</comment>
<protein>
    <recommendedName>
        <fullName>Phosphatidylcholine-sterol acyltransferase</fullName>
        <ecNumber evidence="4">2.3.1.43</ecNumber>
    </recommendedName>
    <alternativeName>
        <fullName>1-alkyl-2-acetylglycerophosphocholine esterase</fullName>
        <ecNumber evidence="1">3.1.1.47</ecNumber>
    </alternativeName>
    <alternativeName>
        <fullName>Lecithin-cholesterol acyltransferase</fullName>
    </alternativeName>
    <alternativeName>
        <fullName>Phospholipid-cholesterol acyltransferase</fullName>
    </alternativeName>
    <alternativeName>
        <fullName evidence="1">Platelet-activating factor acetylhydrolase</fullName>
        <shortName>PAF acetylhydrolase</shortName>
    </alternativeName>
</protein>
<proteinExistence type="evidence at protein level"/>
<feature type="signal peptide" evidence="1">
    <location>
        <begin position="1"/>
        <end position="24"/>
    </location>
</feature>
<feature type="chain" id="PRO_0000017805" description="Phosphatidylcholine-sterol acyltransferase">
    <location>
        <begin position="25"/>
        <end position="440"/>
    </location>
</feature>
<feature type="active site" description="Nucleophile" evidence="1">
    <location>
        <position position="205"/>
    </location>
</feature>
<feature type="active site" description="Charge relay system" evidence="1">
    <location>
        <position position="369"/>
    </location>
</feature>
<feature type="active site" description="Charge relay system" evidence="1">
    <location>
        <position position="401"/>
    </location>
</feature>
<feature type="site" description="Determinant for substrate specificity" evidence="1">
    <location>
        <position position="173"/>
    </location>
</feature>
<feature type="glycosylation site" description="N-linked (GlcNAc...) asparagine" evidence="2">
    <location>
        <position position="44"/>
    </location>
</feature>
<feature type="glycosylation site" description="N-linked (GlcNAc...) asparagine" evidence="2">
    <location>
        <position position="108"/>
    </location>
</feature>
<feature type="glycosylation site" description="N-linked (GlcNAc...) asparagine" evidence="2">
    <location>
        <position position="296"/>
    </location>
</feature>
<feature type="glycosylation site" description="N-linked (GlcNAc...) asparagine" evidence="2">
    <location>
        <position position="408"/>
    </location>
</feature>
<feature type="disulfide bond" evidence="1">
    <location>
        <begin position="74"/>
        <end position="98"/>
    </location>
</feature>
<feature type="disulfide bond" evidence="1">
    <location>
        <begin position="337"/>
        <end position="380"/>
    </location>
</feature>
<organism>
    <name type="scientific">Oryctolagus cuniculus</name>
    <name type="common">Rabbit</name>
    <dbReference type="NCBI Taxonomy" id="9986"/>
    <lineage>
        <taxon>Eukaryota</taxon>
        <taxon>Metazoa</taxon>
        <taxon>Chordata</taxon>
        <taxon>Craniata</taxon>
        <taxon>Vertebrata</taxon>
        <taxon>Euteleostomi</taxon>
        <taxon>Mammalia</taxon>
        <taxon>Eutheria</taxon>
        <taxon>Euarchontoglires</taxon>
        <taxon>Glires</taxon>
        <taxon>Lagomorpha</taxon>
        <taxon>Leporidae</taxon>
        <taxon>Oryctolagus</taxon>
    </lineage>
</organism>
<reference key="1">
    <citation type="journal article" date="1996" name="J. Lipid Res.">
        <title>Cloning of rabbit LCAT cDNA: increase in LCAT mRNA abundance in the liver of cholesterol-fed rabbits.</title>
        <authorList>
            <person name="Murata Y."/>
            <person name="Maeda E."/>
            <person name="Yoshino G."/>
            <person name="Kasuga M."/>
        </authorList>
    </citation>
    <scope>NUCLEOTIDE SEQUENCE [MRNA]</scope>
    <scope>TISSUE SPECIFICITY</scope>
    <scope>INDUCTION</scope>
    <source>
        <strain>New Zealand</strain>
    </source>
</reference>
<reference key="2">
    <citation type="journal article" date="1996" name="J. Lipid Res.">
        <title>Comparative studies on the substrate specificity of lecithin:cholesterol acyltransferase towards the molecular species of phosphatidylcholine in the plasma of 14 vertebrates.</title>
        <authorList>
            <person name="Subbaiah P.V."/>
            <person name="Liu M."/>
        </authorList>
    </citation>
    <scope>CATALYTIC ACTIVITY</scope>
    <scope>FUNCTION</scope>
    <scope>SUBSTRATE SPECIFICITY</scope>
    <scope>SUBCELLULAR LOCATION</scope>
    <scope>TISSUE SPECIFICITY</scope>
</reference>
<gene>
    <name type="primary">LCAT</name>
</gene>
<dbReference type="EC" id="2.3.1.43" evidence="4"/>
<dbReference type="EC" id="3.1.1.47" evidence="1"/>
<dbReference type="EMBL" id="D13668">
    <property type="protein sequence ID" value="BAA02839.1"/>
    <property type="molecule type" value="mRNA"/>
</dbReference>
<dbReference type="RefSeq" id="NP_001075659.1">
    <property type="nucleotide sequence ID" value="NM_001082190.1"/>
</dbReference>
<dbReference type="SMR" id="P53761"/>
<dbReference type="FunCoup" id="P53761">
    <property type="interactions" value="12"/>
</dbReference>
<dbReference type="STRING" id="9986.ENSOCUP00000018119"/>
<dbReference type="ESTHER" id="rabit-lcat">
    <property type="family name" value="PC-sterol_acyltransferase"/>
</dbReference>
<dbReference type="GlyCosmos" id="P53761">
    <property type="glycosylation" value="4 sites, No reported glycans"/>
</dbReference>
<dbReference type="PaxDb" id="9986-ENSOCUP00000018119"/>
<dbReference type="GeneID" id="100008978"/>
<dbReference type="KEGG" id="ocu:100008978"/>
<dbReference type="CTD" id="3931"/>
<dbReference type="eggNOG" id="KOG2369">
    <property type="taxonomic scope" value="Eukaryota"/>
</dbReference>
<dbReference type="InParanoid" id="P53761"/>
<dbReference type="OrthoDB" id="190846at2759"/>
<dbReference type="Proteomes" id="UP000001811">
    <property type="component" value="Unplaced"/>
</dbReference>
<dbReference type="GO" id="GO:0005615">
    <property type="term" value="C:extracellular space"/>
    <property type="evidence" value="ECO:0000250"/>
    <property type="project" value="UniProtKB"/>
</dbReference>
<dbReference type="GO" id="GO:0003847">
    <property type="term" value="F:1-alkyl-2-acetylglycerophosphocholine esterase activity"/>
    <property type="evidence" value="ECO:0000250"/>
    <property type="project" value="UniProtKB"/>
</dbReference>
<dbReference type="GO" id="GO:0004607">
    <property type="term" value="F:phosphatidylcholine-sterol O-acyltransferase activity"/>
    <property type="evidence" value="ECO:0000250"/>
    <property type="project" value="UniProtKB"/>
</dbReference>
<dbReference type="GO" id="GO:0047179">
    <property type="term" value="F:platelet-activating factor acetyltransferase activity"/>
    <property type="evidence" value="ECO:0000250"/>
    <property type="project" value="UniProtKB"/>
</dbReference>
<dbReference type="GO" id="GO:0008203">
    <property type="term" value="P:cholesterol metabolic process"/>
    <property type="evidence" value="ECO:0000250"/>
    <property type="project" value="UniProtKB"/>
</dbReference>
<dbReference type="GO" id="GO:0046470">
    <property type="term" value="P:phosphatidylcholine metabolic process"/>
    <property type="evidence" value="ECO:0000250"/>
    <property type="project" value="UniProtKB"/>
</dbReference>
<dbReference type="FunFam" id="3.40.50.1820:FF:000090">
    <property type="entry name" value="Phosphatidylcholine-sterol acyltransferase"/>
    <property type="match status" value="1"/>
</dbReference>
<dbReference type="FunFam" id="3.40.50.1820:FF:000183">
    <property type="entry name" value="Phosphatidylcholine-sterol acyltransferase"/>
    <property type="match status" value="2"/>
</dbReference>
<dbReference type="Gene3D" id="3.40.50.1820">
    <property type="entry name" value="alpha/beta hydrolase"/>
    <property type="match status" value="3"/>
</dbReference>
<dbReference type="InterPro" id="IPR029058">
    <property type="entry name" value="AB_hydrolase_fold"/>
</dbReference>
<dbReference type="InterPro" id="IPR003386">
    <property type="entry name" value="LACT/PDAT_acylTrfase"/>
</dbReference>
<dbReference type="PANTHER" id="PTHR11440">
    <property type="entry name" value="LECITHIN-CHOLESTEROL ACYLTRANSFERASE-RELATED"/>
    <property type="match status" value="1"/>
</dbReference>
<dbReference type="Pfam" id="PF02450">
    <property type="entry name" value="LCAT"/>
    <property type="match status" value="1"/>
</dbReference>
<dbReference type="SUPFAM" id="SSF53474">
    <property type="entry name" value="alpha/beta-Hydrolases"/>
    <property type="match status" value="1"/>
</dbReference>
<dbReference type="PROSITE" id="PS00120">
    <property type="entry name" value="LIPASE_SER"/>
    <property type="match status" value="1"/>
</dbReference>
<accession>P53761</accession>
<name>LCAT_RABIT</name>
<keyword id="KW-0012">Acyltransferase</keyword>
<keyword id="KW-0153">Cholesterol metabolism</keyword>
<keyword id="KW-1015">Disulfide bond</keyword>
<keyword id="KW-0325">Glycoprotein</keyword>
<keyword id="KW-0378">Hydrolase</keyword>
<keyword id="KW-0443">Lipid metabolism</keyword>
<keyword id="KW-1185">Reference proteome</keyword>
<keyword id="KW-0964">Secreted</keyword>
<keyword id="KW-0732">Signal</keyword>
<keyword id="KW-0753">Steroid metabolism</keyword>
<keyword id="KW-1207">Sterol metabolism</keyword>
<keyword id="KW-0808">Transferase</keyword>
<evidence type="ECO:0000250" key="1">
    <source>
        <dbReference type="UniProtKB" id="P04180"/>
    </source>
</evidence>
<evidence type="ECO:0000255" key="2"/>
<evidence type="ECO:0000255" key="3">
    <source>
        <dbReference type="PROSITE-ProRule" id="PRU10037"/>
    </source>
</evidence>
<evidence type="ECO:0000269" key="4">
    <source>
    </source>
</evidence>
<evidence type="ECO:0000269" key="5">
    <source>
    </source>
</evidence>
<evidence type="ECO:0000305" key="6"/>
<sequence length="440" mass="49560">MGPPGSPWQWVLLLLGLLLPPAAPFWLLNVLFPPHTTPKAELSNHTRPVILVPGCLGNQLEAKLDKPSVVNWMCYRKTEDFFTIWLDLNMFLPLGVDCWIDNTRVVYNRSSGRVVISPGVQIRVPGFGKTYSVEYLDNNKLAGYMHTLVQNLVNNGYVRDETVRAAPYDWRLEPSQQEEYYGKLAGLVEEMHAAYGKPVFLIGHSLGCLHLLYFLLRQPQSWKDRFIDGFISLGAPWGGSIKPMLVLASGDNQGIPLMSSIKLREEQRITTTSPWMFPSQGVWPEDHVFISTPSFNYTGRDFKRFFEDLHFEEGWYMWLQSRDLLAGLPAPGVEVYCLYGIGLPTPHTYIYDHGFPYTDPVGVLYEDGDDTVATSSTDLCGLWRGRQPQPVHLLPLHETEHLNMVFSNQTLEHINAILLGAYRSGTPASPTASPGSPPPE</sequence>